<dbReference type="EMBL" id="J05077">
    <property type="protein sequence ID" value="AAA48744.1"/>
    <property type="molecule type" value="mRNA"/>
</dbReference>
<dbReference type="PIR" id="A34456">
    <property type="entry name" value="UDCH"/>
</dbReference>
<dbReference type="RefSeq" id="NP_990831.2">
    <property type="nucleotide sequence ID" value="NM_205500.2"/>
</dbReference>
<dbReference type="PDB" id="1A67">
    <property type="method" value="NMR"/>
    <property type="chains" value="A=32-139"/>
</dbReference>
<dbReference type="PDB" id="1A90">
    <property type="method" value="NMR"/>
    <property type="chains" value="A=32-139"/>
</dbReference>
<dbReference type="PDB" id="1CEW">
    <property type="method" value="X-ray"/>
    <property type="resolution" value="2.00 A"/>
    <property type="chains" value="I=32-139"/>
</dbReference>
<dbReference type="PDB" id="1YVB">
    <property type="method" value="X-ray"/>
    <property type="resolution" value="2.70 A"/>
    <property type="chains" value="I=29-139"/>
</dbReference>
<dbReference type="PDBsum" id="1A67"/>
<dbReference type="PDBsum" id="1A90"/>
<dbReference type="PDBsum" id="1CEW"/>
<dbReference type="PDBsum" id="1YVB"/>
<dbReference type="SMR" id="P01038"/>
<dbReference type="DIP" id="DIP-61237N"/>
<dbReference type="FunCoup" id="P01038">
    <property type="interactions" value="4"/>
</dbReference>
<dbReference type="IntAct" id="P01038">
    <property type="interactions" value="1"/>
</dbReference>
<dbReference type="STRING" id="9031.ENSGALP00000043172"/>
<dbReference type="MEROPS" id="I25.011"/>
<dbReference type="iPTMnet" id="P01038"/>
<dbReference type="PaxDb" id="9031-ENSGALP00000043172"/>
<dbReference type="ABCD" id="P01038">
    <property type="antibodies" value="1 sequenced antibody"/>
</dbReference>
<dbReference type="GeneID" id="396497"/>
<dbReference type="KEGG" id="gga:396497"/>
<dbReference type="CTD" id="1471"/>
<dbReference type="VEuPathDB" id="HostDB:geneid_396497"/>
<dbReference type="eggNOG" id="ENOG502SC50">
    <property type="taxonomic scope" value="Eukaryota"/>
</dbReference>
<dbReference type="HOGENOM" id="CLU_118168_0_1_1"/>
<dbReference type="InParanoid" id="P01038"/>
<dbReference type="OrthoDB" id="1908104at2759"/>
<dbReference type="PhylomeDB" id="P01038"/>
<dbReference type="EvolutionaryTrace" id="P01038"/>
<dbReference type="PRO" id="PR:P01038"/>
<dbReference type="Proteomes" id="UP000000539">
    <property type="component" value="Unassembled WGS sequence"/>
</dbReference>
<dbReference type="GO" id="GO:0005737">
    <property type="term" value="C:cytoplasm"/>
    <property type="evidence" value="ECO:0000318"/>
    <property type="project" value="GO_Central"/>
</dbReference>
<dbReference type="GO" id="GO:0005615">
    <property type="term" value="C:extracellular space"/>
    <property type="evidence" value="ECO:0000318"/>
    <property type="project" value="GO_Central"/>
</dbReference>
<dbReference type="GO" id="GO:0031982">
    <property type="term" value="C:vesicle"/>
    <property type="evidence" value="ECO:0000318"/>
    <property type="project" value="GO_Central"/>
</dbReference>
<dbReference type="GO" id="GO:0004869">
    <property type="term" value="F:cysteine-type endopeptidase inhibitor activity"/>
    <property type="evidence" value="ECO:0000318"/>
    <property type="project" value="GO_Central"/>
</dbReference>
<dbReference type="CDD" id="cd00042">
    <property type="entry name" value="CY"/>
    <property type="match status" value="1"/>
</dbReference>
<dbReference type="FunFam" id="3.10.450.10:FF:000004">
    <property type="entry name" value="Cystatin C"/>
    <property type="match status" value="1"/>
</dbReference>
<dbReference type="Gene3D" id="3.10.450.10">
    <property type="match status" value="1"/>
</dbReference>
<dbReference type="InterPro" id="IPR000010">
    <property type="entry name" value="Cystatin_dom"/>
</dbReference>
<dbReference type="InterPro" id="IPR046350">
    <property type="entry name" value="Cystatin_sf"/>
</dbReference>
<dbReference type="InterPro" id="IPR018073">
    <property type="entry name" value="Prot_inh_cystat_CS"/>
</dbReference>
<dbReference type="PANTHER" id="PTHR46186">
    <property type="entry name" value="CYSTATIN"/>
    <property type="match status" value="1"/>
</dbReference>
<dbReference type="PANTHER" id="PTHR46186:SF2">
    <property type="entry name" value="CYSTATIN"/>
    <property type="match status" value="1"/>
</dbReference>
<dbReference type="Pfam" id="PF00031">
    <property type="entry name" value="Cystatin"/>
    <property type="match status" value="1"/>
</dbReference>
<dbReference type="SMART" id="SM00043">
    <property type="entry name" value="CY"/>
    <property type="match status" value="1"/>
</dbReference>
<dbReference type="SUPFAM" id="SSF54403">
    <property type="entry name" value="Cystatin/monellin"/>
    <property type="match status" value="1"/>
</dbReference>
<dbReference type="PROSITE" id="PS00287">
    <property type="entry name" value="CYSTATIN"/>
    <property type="match status" value="1"/>
</dbReference>
<organism>
    <name type="scientific">Gallus gallus</name>
    <name type="common">Chicken</name>
    <dbReference type="NCBI Taxonomy" id="9031"/>
    <lineage>
        <taxon>Eukaryota</taxon>
        <taxon>Metazoa</taxon>
        <taxon>Chordata</taxon>
        <taxon>Craniata</taxon>
        <taxon>Vertebrata</taxon>
        <taxon>Euteleostomi</taxon>
        <taxon>Archelosauria</taxon>
        <taxon>Archosauria</taxon>
        <taxon>Dinosauria</taxon>
        <taxon>Saurischia</taxon>
        <taxon>Theropoda</taxon>
        <taxon>Coelurosauria</taxon>
        <taxon>Aves</taxon>
        <taxon>Neognathae</taxon>
        <taxon>Galloanserae</taxon>
        <taxon>Galliformes</taxon>
        <taxon>Phasianidae</taxon>
        <taxon>Phasianinae</taxon>
        <taxon>Gallus</taxon>
    </lineage>
</organism>
<sequence length="139" mass="15287">MAGARGCVVLLAAALMLVGAVLGSEDRSRLLGAPVPVDENDEGLQRALQFAMAEYNRASNDKYSSRVVRVISAKRQLVSGIKYILQVEIGRTTCPKSSGDLQSCEFHDEPEMAKYTTCTFVVYSIPWLNQIKLLESKCQ</sequence>
<keyword id="KW-0002">3D-structure</keyword>
<keyword id="KW-0903">Direct protein sequencing</keyword>
<keyword id="KW-1015">Disulfide bond</keyword>
<keyword id="KW-0597">Phosphoprotein</keyword>
<keyword id="KW-0646">Protease inhibitor</keyword>
<keyword id="KW-1185">Reference proteome</keyword>
<keyword id="KW-0964">Secreted</keyword>
<keyword id="KW-0732">Signal</keyword>
<keyword id="KW-0789">Thiol protease inhibitor</keyword>
<comment type="function">
    <text>This protein binds tightly to and inhibits a variety of thiol proteases including ficin, papain, and cathepsins B, C, H, and L. Although isolated from egg white, it is also present in serum.</text>
</comment>
<comment type="interaction">
    <interactant intactId="EBI-15593412">
        <id>P01038</id>
    </interactant>
    <interactant intactId="EBI-15593394">
        <id>Q9N6S8</id>
    </interactant>
    <organismsDiffer>true</organismsDiffer>
    <experiments>2</experiments>
</comment>
<comment type="subcellular location">
    <subcellularLocation>
        <location>Secreted</location>
    </subcellularLocation>
</comment>
<comment type="similarity">
    <text evidence="5">Belongs to the cystatin family.</text>
</comment>
<proteinExistence type="evidence at protein level"/>
<evidence type="ECO:0000269" key="1">
    <source>
    </source>
</evidence>
<evidence type="ECO:0000269" key="2">
    <source>
    </source>
</evidence>
<evidence type="ECO:0000269" key="3">
    <source>
    </source>
</evidence>
<evidence type="ECO:0000269" key="4">
    <source ref="5"/>
</evidence>
<evidence type="ECO:0000305" key="5"/>
<evidence type="ECO:0007829" key="6">
    <source>
        <dbReference type="PDB" id="1CEW"/>
    </source>
</evidence>
<evidence type="ECO:0007829" key="7">
    <source>
        <dbReference type="PDB" id="1YVB"/>
    </source>
</evidence>
<reference key="1">
    <citation type="journal article" date="1989" name="J. Biol. Chem.">
        <title>Chicken egg white cystatin. Molecular cloning, nucleotide sequence, and tissue distribution.</title>
        <authorList>
            <person name="Colella R."/>
            <person name="Sakaguchi Y."/>
            <person name="Nagase H."/>
            <person name="Bird J.W.C."/>
        </authorList>
    </citation>
    <scope>NUCLEOTIDE SEQUENCE [MRNA]</scope>
</reference>
<reference key="2">
    <citation type="journal article" date="1984" name="Biochem. J.">
        <title>Cystatin. Amino acid sequence and possible secondary structure.</title>
        <authorList>
            <person name="Schwabe C."/>
            <person name="Anastasi A."/>
            <person name="Crow H."/>
            <person name="McDonald J.K."/>
            <person name="Barrett A.J."/>
        </authorList>
    </citation>
    <scope>PROTEIN SEQUENCE OF 24-139</scope>
</reference>
<reference key="3">
    <citation type="journal article" date="1983" name="Hoppe-Seyler's Z. Physiol. Chem.">
        <title>Protein inhibitors of cysteine proteinases. III. Amino-acid sequence of cystatin from chicken egg white.</title>
        <authorList>
            <person name="Turk V."/>
            <person name="Brzin J."/>
            <person name="Longer M."/>
            <person name="Ritonja A."/>
            <person name="Eropkin M."/>
            <person name="Borchart U."/>
            <person name="Machleidt W."/>
        </authorList>
    </citation>
    <scope>PROTEIN SEQUENCE OF 24-139</scope>
</reference>
<reference key="4">
    <citation type="journal article" date="1983" name="Biochem. J.">
        <title>Cystatin, a protein inhibitor of cysteine proteinases. Improved purification from egg white, characterization, and detection in chicken serum.</title>
        <authorList>
            <person name="Anastasi A."/>
            <person name="Brown M.A."/>
            <person name="Kembhavi A.A."/>
            <person name="Nicklin M.J.H."/>
            <person name="Sayers C.A."/>
            <person name="Sunter D.C."/>
            <person name="Barrett A.J."/>
        </authorList>
    </citation>
    <scope>CHARACTERIZATION OF PROTEIN</scope>
</reference>
<reference key="5">
    <citation type="journal article" date="1984" name="FEBS Lett.">
        <title>The disulphide bridges of human cystatin C (gamma-trace) and chicken cystatin.</title>
        <authorList>
            <person name="Grubb A."/>
            <person name="Loefberg H."/>
            <person name="Barrett A.J."/>
        </authorList>
    </citation>
    <scope>DISULFIDE BONDS</scope>
</reference>
<reference key="6">
    <citation type="journal article" date="1989" name="FEBS Lett.">
        <title>The cysteine proteinase inhibitor chicken cystatin is a phosphoprotein.</title>
        <authorList>
            <person name="Laber B."/>
            <person name="Krieglstein K."/>
            <person name="Henschen A."/>
            <person name="Kos J."/>
            <person name="Turk V."/>
            <person name="Huber R."/>
            <person name="Bode W."/>
        </authorList>
    </citation>
    <scope>PHOSPHORYLATION AT SER-103</scope>
</reference>
<reference key="7">
    <citation type="journal article" date="1988" name="EMBO J.">
        <title>The 2.0 A X-ray crystal structure of chicken egg white cystatin and its possible mode of interaction with cysteine proteinases.</title>
        <authorList>
            <person name="Bode W."/>
            <person name="Engh R."/>
            <person name="Musil D."/>
            <person name="Thiele U."/>
            <person name="Huber R."/>
            <person name="Karshikov A."/>
            <person name="Brzin J."/>
            <person name="Kos J."/>
            <person name="Turk V."/>
        </authorList>
    </citation>
    <scope>X-RAY CRYSTALLOGRAPHY (2.0 ANGSTROMS)</scope>
</reference>
<reference key="8">
    <citation type="journal article" date="1993" name="J. Mol. Biol.">
        <title>The structures of native phosphorylated chicken cystatin and of a recombinant unphosphorylated variant in solution.</title>
        <authorList>
            <person name="Dieckmann T."/>
            <person name="Mitschang L."/>
            <person name="Hofmann M."/>
            <person name="Kos J."/>
            <person name="Turk V."/>
            <person name="Auerswald E.A."/>
            <person name="Jeanicke R."/>
            <person name="Oschkinat H."/>
        </authorList>
    </citation>
    <scope>STRUCTURE BY NMR</scope>
</reference>
<protein>
    <recommendedName>
        <fullName>Cystatin</fullName>
    </recommendedName>
    <alternativeName>
        <fullName>Egg-white cystatin</fullName>
    </alternativeName>
    <alternativeName>
        <fullName>Ovocystatin</fullName>
    </alternativeName>
</protein>
<feature type="signal peptide" evidence="2 3">
    <location>
        <begin position="1"/>
        <end position="23"/>
    </location>
</feature>
<feature type="chain" id="PRO_0000006663" description="Cystatin">
    <location>
        <begin position="24"/>
        <end position="139"/>
    </location>
</feature>
<feature type="short sequence motif" description="Secondary area of contact">
    <location>
        <begin position="76"/>
        <end position="80"/>
    </location>
</feature>
<feature type="site" description="Reactive site">
    <location>
        <position position="32"/>
    </location>
</feature>
<feature type="modified residue" description="Phosphoserine" evidence="1">
    <location>
        <position position="103"/>
    </location>
</feature>
<feature type="disulfide bond" evidence="4">
    <location>
        <begin position="94"/>
        <end position="104"/>
    </location>
</feature>
<feature type="disulfide bond" evidence="4">
    <location>
        <begin position="118"/>
        <end position="138"/>
    </location>
</feature>
<feature type="helix" evidence="6">
    <location>
        <begin position="42"/>
        <end position="51"/>
    </location>
</feature>
<feature type="helix" evidence="6">
    <location>
        <begin position="53"/>
        <end position="56"/>
    </location>
</feature>
<feature type="strand" evidence="6">
    <location>
        <begin position="62"/>
        <end position="95"/>
    </location>
</feature>
<feature type="strand" evidence="7">
    <location>
        <begin position="96"/>
        <end position="99"/>
    </location>
</feature>
<feature type="helix" evidence="6">
    <location>
        <begin position="101"/>
        <end position="108"/>
    </location>
</feature>
<feature type="strand" evidence="6">
    <location>
        <begin position="115"/>
        <end position="125"/>
    </location>
</feature>
<feature type="turn" evidence="6">
    <location>
        <begin position="126"/>
        <end position="129"/>
    </location>
</feature>
<feature type="strand" evidence="6">
    <location>
        <begin position="130"/>
        <end position="138"/>
    </location>
</feature>
<name>CYT_CHICK</name>
<accession>P01038</accession>